<gene>
    <name type="ORF">LMJF_16_0310</name>
</gene>
<feature type="chain" id="PRO_0000414150" description="tRNA (guanine(37)-N(1))-methyltransferase">
    <location>
        <begin position="1"/>
        <end position="686"/>
    </location>
</feature>
<feature type="region of interest" description="Disordered" evidence="2">
    <location>
        <begin position="206"/>
        <end position="244"/>
    </location>
</feature>
<feature type="binding site" evidence="1">
    <location>
        <position position="428"/>
    </location>
    <ligand>
        <name>S-adenosyl-L-methionine</name>
        <dbReference type="ChEBI" id="CHEBI:59789"/>
    </ligand>
</feature>
<feature type="binding site" evidence="1">
    <location>
        <begin position="466"/>
        <end position="467"/>
    </location>
    <ligand>
        <name>S-adenosyl-L-methionine</name>
        <dbReference type="ChEBI" id="CHEBI:59789"/>
    </ligand>
</feature>
<feature type="binding site" evidence="1">
    <location>
        <begin position="495"/>
        <end position="496"/>
    </location>
    <ligand>
        <name>S-adenosyl-L-methionine</name>
        <dbReference type="ChEBI" id="CHEBI:59789"/>
    </ligand>
</feature>
<feature type="binding site" evidence="1">
    <location>
        <position position="530"/>
    </location>
    <ligand>
        <name>S-adenosyl-L-methionine</name>
        <dbReference type="ChEBI" id="CHEBI:59789"/>
    </ligand>
</feature>
<keyword id="KW-0963">Cytoplasm</keyword>
<keyword id="KW-0489">Methyltransferase</keyword>
<keyword id="KW-0496">Mitochondrion</keyword>
<keyword id="KW-0539">Nucleus</keyword>
<keyword id="KW-1185">Reference proteome</keyword>
<keyword id="KW-0949">S-adenosyl-L-methionine</keyword>
<keyword id="KW-0808">Transferase</keyword>
<keyword id="KW-0819">tRNA processing</keyword>
<protein>
    <recommendedName>
        <fullName evidence="1">tRNA (guanine(37)-N(1))-methyltransferase</fullName>
        <ecNumber evidence="1">2.1.1.228</ecNumber>
    </recommendedName>
    <alternativeName>
        <fullName evidence="1">M1G-methyltransferase</fullName>
    </alternativeName>
    <alternativeName>
        <fullName evidence="1">tRNA [GM37] methyltransferase</fullName>
    </alternativeName>
    <alternativeName>
        <fullName evidence="1">tRNA methyltransferase 5 homolog</fullName>
    </alternativeName>
</protein>
<proteinExistence type="inferred from homology"/>
<accession>Q4QEY9</accession>
<organism>
    <name type="scientific">Leishmania major</name>
    <dbReference type="NCBI Taxonomy" id="5664"/>
    <lineage>
        <taxon>Eukaryota</taxon>
        <taxon>Discoba</taxon>
        <taxon>Euglenozoa</taxon>
        <taxon>Kinetoplastea</taxon>
        <taxon>Metakinetoplastina</taxon>
        <taxon>Trypanosomatida</taxon>
        <taxon>Trypanosomatidae</taxon>
        <taxon>Leishmaniinae</taxon>
        <taxon>Leishmania</taxon>
    </lineage>
</organism>
<sequence length="686" mass="73577">MSAKQDGSTAESRKAPHSYRERVNSTVELAALVYRPLTASGALLSILRGKLYRRRSVRNVLDVVAVRSISGGQGHSAESKVRVEYLTPAEGNANGNSISNISAAPCADIRGSSDTAATSSSPSTPAQPTLLEGRCKMCLLDPTVLKATELCPDPASAAQHCTPVFLLGAAVVGSHVTRQLEAAVQAGQLSRKAADLLQQLHERLAGGPSSVSLTEDTDGSEQPQGLPRAAAAPPPPSNKRRASYTGAVEVTFTPRAVELNYQAYTMSELLSMVLPLREHADLVALSGFEQVGHIAHVNLSAAHLPYADIIGQVILDCNETVSVVVNKVDAISSVFREFKMDIIGLRRRTDSVDGNVVAGADLDDAGEAGGSLTAAERQAIALEALSPTYSLAEARVHRLLTATVRQHGCSFRVPYNRVYWNSRLSFEHTRLVDRMRPGDVLFDVMAGVGPFAVPAAKKGVQVFANDLNPVAAQYMKVNAELNHLPANALHVFNMDGRDFLNSVLFTSVTRAADASLPGHLCTGRRHVTMNLPAIAVEFLDVFQPLSSTCAPASEQRCNASAAAVVNERWNHLPAHVDPNAIDRRTLFHVYCFSAAEDLITDAVRQVEVNLGYTLPPENIEETLMVRDVAPTKRMMCVSFTLPPAFWKNLLASRPGQGGEPGGAHAETASTLVEVEQAAKKARPDKM</sequence>
<reference key="1">
    <citation type="journal article" date="2005" name="Science">
        <title>The genome of the kinetoplastid parasite, Leishmania major.</title>
        <authorList>
            <person name="Ivens A.C."/>
            <person name="Peacock C.S."/>
            <person name="Worthey E.A."/>
            <person name="Murphy L."/>
            <person name="Aggarwal G."/>
            <person name="Berriman M."/>
            <person name="Sisk E."/>
            <person name="Rajandream M.A."/>
            <person name="Adlem E."/>
            <person name="Aert R."/>
            <person name="Anupama A."/>
            <person name="Apostolou Z."/>
            <person name="Attipoe P."/>
            <person name="Bason N."/>
            <person name="Bauser C."/>
            <person name="Beck A."/>
            <person name="Beverley S.M."/>
            <person name="Bianchettin G."/>
            <person name="Borzym K."/>
            <person name="Bothe G."/>
            <person name="Bruschi C.V."/>
            <person name="Collins M."/>
            <person name="Cadag E."/>
            <person name="Ciarloni L."/>
            <person name="Clayton C."/>
            <person name="Coulson R.M.R."/>
            <person name="Cronin A."/>
            <person name="Cruz A.K."/>
            <person name="Davies R.M."/>
            <person name="De Gaudenzi J."/>
            <person name="Dobson D.E."/>
            <person name="Duesterhoeft A."/>
            <person name="Fazelina G."/>
            <person name="Fosker N."/>
            <person name="Frasch A.C."/>
            <person name="Fraser A."/>
            <person name="Fuchs M."/>
            <person name="Gabel C."/>
            <person name="Goble A."/>
            <person name="Goffeau A."/>
            <person name="Harris D."/>
            <person name="Hertz-Fowler C."/>
            <person name="Hilbert H."/>
            <person name="Horn D."/>
            <person name="Huang Y."/>
            <person name="Klages S."/>
            <person name="Knights A."/>
            <person name="Kube M."/>
            <person name="Larke N."/>
            <person name="Litvin L."/>
            <person name="Lord A."/>
            <person name="Louie T."/>
            <person name="Marra M."/>
            <person name="Masuy D."/>
            <person name="Matthews K."/>
            <person name="Michaeli S."/>
            <person name="Mottram J.C."/>
            <person name="Mueller-Auer S."/>
            <person name="Munden H."/>
            <person name="Nelson S."/>
            <person name="Norbertczak H."/>
            <person name="Oliver K."/>
            <person name="O'neil S."/>
            <person name="Pentony M."/>
            <person name="Pohl T.M."/>
            <person name="Price C."/>
            <person name="Purnelle B."/>
            <person name="Quail M.A."/>
            <person name="Rabbinowitsch E."/>
            <person name="Reinhardt R."/>
            <person name="Rieger M."/>
            <person name="Rinta J."/>
            <person name="Robben J."/>
            <person name="Robertson L."/>
            <person name="Ruiz J.C."/>
            <person name="Rutter S."/>
            <person name="Saunders D."/>
            <person name="Schaefer M."/>
            <person name="Schein J."/>
            <person name="Schwartz D.C."/>
            <person name="Seeger K."/>
            <person name="Seyler A."/>
            <person name="Sharp S."/>
            <person name="Shin H."/>
            <person name="Sivam D."/>
            <person name="Squares R."/>
            <person name="Squares S."/>
            <person name="Tosato V."/>
            <person name="Vogt C."/>
            <person name="Volckaert G."/>
            <person name="Wambutt R."/>
            <person name="Warren T."/>
            <person name="Wedler H."/>
            <person name="Woodward J."/>
            <person name="Zhou S."/>
            <person name="Zimmermann W."/>
            <person name="Smith D.F."/>
            <person name="Blackwell J.M."/>
            <person name="Stuart K.D."/>
            <person name="Barrell B.G."/>
            <person name="Myler P.J."/>
        </authorList>
    </citation>
    <scope>NUCLEOTIDE SEQUENCE [LARGE SCALE GENOMIC DNA]</scope>
    <source>
        <strain>MHOM/IL/81/Friedlin</strain>
    </source>
</reference>
<comment type="function">
    <text evidence="1">Specifically methylates the N1 position of guanosine-37 in various cytoplasmic and mitochondrial tRNAs. Methylation is not dependent on the nature of the nucleoside 5' of the target nucleoside. This is the first step in the biosynthesis of wybutosine (yW), a modified base adjacent to the anticodon of tRNAs and required for accurate decoding.</text>
</comment>
<comment type="catalytic activity">
    <reaction evidence="1">
        <text>guanosine(37) in tRNA + S-adenosyl-L-methionine = N(1)-methylguanosine(37) in tRNA + S-adenosyl-L-homocysteine + H(+)</text>
        <dbReference type="Rhea" id="RHEA:36899"/>
        <dbReference type="Rhea" id="RHEA-COMP:10145"/>
        <dbReference type="Rhea" id="RHEA-COMP:10147"/>
        <dbReference type="ChEBI" id="CHEBI:15378"/>
        <dbReference type="ChEBI" id="CHEBI:57856"/>
        <dbReference type="ChEBI" id="CHEBI:59789"/>
        <dbReference type="ChEBI" id="CHEBI:73542"/>
        <dbReference type="ChEBI" id="CHEBI:74269"/>
        <dbReference type="EC" id="2.1.1.228"/>
    </reaction>
</comment>
<comment type="subunit">
    <text evidence="1">Monomer.</text>
</comment>
<comment type="subcellular location">
    <subcellularLocation>
        <location evidence="1">Mitochondrion matrix</location>
    </subcellularLocation>
    <subcellularLocation>
        <location evidence="1">Nucleus</location>
    </subcellularLocation>
    <subcellularLocation>
        <location evidence="1">Cytoplasm</location>
    </subcellularLocation>
    <text evidence="1">Predominantly in the mitochondria and in the nucleus.</text>
</comment>
<comment type="similarity">
    <text evidence="3">Belongs to the class I-like SAM-binding methyltransferase superfamily. TRM5/TYW2 family.</text>
</comment>
<dbReference type="EC" id="2.1.1.228" evidence="1"/>
<dbReference type="EMBL" id="FR796412">
    <property type="protein sequence ID" value="CAJ03475.1"/>
    <property type="molecule type" value="Genomic_DNA"/>
</dbReference>
<dbReference type="RefSeq" id="XP_001682109.1">
    <property type="nucleotide sequence ID" value="XM_001682057.1"/>
</dbReference>
<dbReference type="FunCoup" id="Q4QEY9">
    <property type="interactions" value="217"/>
</dbReference>
<dbReference type="STRING" id="5664.Q4QEY9"/>
<dbReference type="EnsemblProtists" id="CAJ03475">
    <property type="protein sequence ID" value="CAJ03475"/>
    <property type="gene ID" value="LMJF_16_0310"/>
</dbReference>
<dbReference type="GeneID" id="5650576"/>
<dbReference type="KEGG" id="lma:LMJF_16_0310"/>
<dbReference type="VEuPathDB" id="TriTrypDB:LmjF.16.0310"/>
<dbReference type="VEuPathDB" id="TriTrypDB:LMJFC_160008600"/>
<dbReference type="VEuPathDB" id="TriTrypDB:LMJLV39_160008300"/>
<dbReference type="VEuPathDB" id="TriTrypDB:LMJSD75_160008300"/>
<dbReference type="eggNOG" id="KOG2078">
    <property type="taxonomic scope" value="Eukaryota"/>
</dbReference>
<dbReference type="HOGENOM" id="CLU_401420_0_0_1"/>
<dbReference type="InParanoid" id="Q4QEY9"/>
<dbReference type="OMA" id="CKMCLLD"/>
<dbReference type="Proteomes" id="UP000000542">
    <property type="component" value="Chromosome 16"/>
</dbReference>
<dbReference type="GO" id="GO:0005737">
    <property type="term" value="C:cytoplasm"/>
    <property type="evidence" value="ECO:0000318"/>
    <property type="project" value="GO_Central"/>
</dbReference>
<dbReference type="GO" id="GO:0005759">
    <property type="term" value="C:mitochondrial matrix"/>
    <property type="evidence" value="ECO:0007669"/>
    <property type="project" value="UniProtKB-SubCell"/>
</dbReference>
<dbReference type="GO" id="GO:0005634">
    <property type="term" value="C:nucleus"/>
    <property type="evidence" value="ECO:0007669"/>
    <property type="project" value="UniProtKB-SubCell"/>
</dbReference>
<dbReference type="GO" id="GO:0052906">
    <property type="term" value="F:tRNA (guanine(37)-N1)-methyltransferase activity"/>
    <property type="evidence" value="ECO:0007669"/>
    <property type="project" value="UniProtKB-UniRule"/>
</dbReference>
<dbReference type="GO" id="GO:0008175">
    <property type="term" value="F:tRNA methyltransferase activity"/>
    <property type="evidence" value="ECO:0000318"/>
    <property type="project" value="GO_Central"/>
</dbReference>
<dbReference type="GO" id="GO:0002939">
    <property type="term" value="P:tRNA N1-guanine methylation"/>
    <property type="evidence" value="ECO:0000318"/>
    <property type="project" value="GO_Central"/>
</dbReference>
<dbReference type="FunFam" id="3.30.300.110:FF:000005">
    <property type="entry name" value="tRNA (guanine(37)-N1)-methyltransferase"/>
    <property type="match status" value="1"/>
</dbReference>
<dbReference type="FunFam" id="3.40.50.150:FF:000765">
    <property type="entry name" value="tRNA (guanine(37)-N1)-methyltransferase"/>
    <property type="match status" value="1"/>
</dbReference>
<dbReference type="Gene3D" id="3.30.300.110">
    <property type="entry name" value="Met-10+ protein-like domains"/>
    <property type="match status" value="1"/>
</dbReference>
<dbReference type="Gene3D" id="3.40.50.150">
    <property type="entry name" value="Vaccinia Virus protein VP39"/>
    <property type="match status" value="1"/>
</dbReference>
<dbReference type="HAMAP" id="MF_03152">
    <property type="entry name" value="TRM5"/>
    <property type="match status" value="1"/>
</dbReference>
<dbReference type="InterPro" id="IPR030382">
    <property type="entry name" value="MeTrfase_TRM5/TYW2"/>
</dbReference>
<dbReference type="InterPro" id="IPR029063">
    <property type="entry name" value="SAM-dependent_MTases_sf"/>
</dbReference>
<dbReference type="InterPro" id="IPR056743">
    <property type="entry name" value="TRM5-TYW2-like_MTfase"/>
</dbReference>
<dbReference type="InterPro" id="IPR056744">
    <property type="entry name" value="TRM5/TYW2-like_N"/>
</dbReference>
<dbReference type="InterPro" id="IPR025792">
    <property type="entry name" value="tRNA_Gua_MeTrfase_euk"/>
</dbReference>
<dbReference type="PANTHER" id="PTHR23245:SF43">
    <property type="entry name" value="TRNA (GUANINE(37)-N1)-METHYLTRANSFERASE 2"/>
    <property type="match status" value="1"/>
</dbReference>
<dbReference type="PANTHER" id="PTHR23245">
    <property type="entry name" value="TRNA METHYLTRANSFERASE"/>
    <property type="match status" value="1"/>
</dbReference>
<dbReference type="Pfam" id="PF02475">
    <property type="entry name" value="TRM5-TYW2_MTfase"/>
    <property type="match status" value="1"/>
</dbReference>
<dbReference type="Pfam" id="PF25133">
    <property type="entry name" value="TYW2_N_2"/>
    <property type="match status" value="1"/>
</dbReference>
<dbReference type="SUPFAM" id="SSF53335">
    <property type="entry name" value="S-adenosyl-L-methionine-dependent methyltransferases"/>
    <property type="match status" value="1"/>
</dbReference>
<dbReference type="PROSITE" id="PS51684">
    <property type="entry name" value="SAM_MT_TRM5_TYW2"/>
    <property type="match status" value="1"/>
</dbReference>
<name>TRM5_LEIMA</name>
<evidence type="ECO:0000255" key="1">
    <source>
        <dbReference type="HAMAP-Rule" id="MF_03152"/>
    </source>
</evidence>
<evidence type="ECO:0000256" key="2">
    <source>
        <dbReference type="SAM" id="MobiDB-lite"/>
    </source>
</evidence>
<evidence type="ECO:0000305" key="3"/>